<reference key="1">
    <citation type="journal article" date="1992" name="DNA Seq.">
        <title>Sequence of bovine interleukin 7.</title>
        <authorList>
            <person name="Cludts I."/>
            <person name="Droogmans L."/>
            <person name="Cleuter Y."/>
            <person name="Kettmann R."/>
            <person name="Burny A."/>
        </authorList>
    </citation>
    <scope>NUCLEOTIDE SEQUENCE [GENOMIC DNA]</scope>
    <source>
        <strain>Holstein</strain>
    </source>
</reference>
<reference key="2">
    <citation type="submission" date="2007-11" db="EMBL/GenBank/DDBJ databases">
        <title>U.S. veterinary immune reagent network: expressed bovine gene sequences.</title>
        <authorList>
            <consortium name="U.S. Veterinary Immune Reagent Network"/>
            <person name="Hudgens T."/>
            <person name="Tompkins D."/>
            <person name="Baldwin C.L."/>
        </authorList>
    </citation>
    <scope>NUCLEOTIDE SEQUENCE [LARGE SCALE MRNA]</scope>
    <source>
        <strain>Belted Galloway</strain>
        <tissue>Peripheral blood</tissue>
    </source>
</reference>
<reference key="3">
    <citation type="submission" date="2007-06" db="EMBL/GenBank/DDBJ databases">
        <authorList>
            <consortium name="NIH - Mammalian Gene Collection (MGC) project"/>
        </authorList>
    </citation>
    <scope>NUCLEOTIDE SEQUENCE [LARGE SCALE MRNA]</scope>
    <source>
        <strain>Hereford</strain>
        <tissue>Thymus</tissue>
    </source>
</reference>
<gene>
    <name type="primary">IL7</name>
</gene>
<evidence type="ECO:0000250" key="1"/>
<evidence type="ECO:0000250" key="2">
    <source>
        <dbReference type="UniProtKB" id="P13232"/>
    </source>
</evidence>
<evidence type="ECO:0000255" key="3"/>
<evidence type="ECO:0000256" key="4">
    <source>
        <dbReference type="SAM" id="MobiDB-lite"/>
    </source>
</evidence>
<evidence type="ECO:0000305" key="5"/>
<accession>P26895</accession>
<accession>A5PKF2</accession>
<accession>A9QWR0</accession>
<keyword id="KW-0202">Cytokine</keyword>
<keyword id="KW-1015">Disulfide bond</keyword>
<keyword id="KW-0325">Glycoprotein</keyword>
<keyword id="KW-0339">Growth factor</keyword>
<keyword id="KW-1185">Reference proteome</keyword>
<keyword id="KW-0964">Secreted</keyword>
<keyword id="KW-0732">Signal</keyword>
<name>IL7_BOVIN</name>
<organism>
    <name type="scientific">Bos taurus</name>
    <name type="common">Bovine</name>
    <dbReference type="NCBI Taxonomy" id="9913"/>
    <lineage>
        <taxon>Eukaryota</taxon>
        <taxon>Metazoa</taxon>
        <taxon>Chordata</taxon>
        <taxon>Craniata</taxon>
        <taxon>Vertebrata</taxon>
        <taxon>Euteleostomi</taxon>
        <taxon>Mammalia</taxon>
        <taxon>Eutheria</taxon>
        <taxon>Laurasiatheria</taxon>
        <taxon>Artiodactyla</taxon>
        <taxon>Ruminantia</taxon>
        <taxon>Pecora</taxon>
        <taxon>Bovidae</taxon>
        <taxon>Bovinae</taxon>
        <taxon>Bos</taxon>
    </lineage>
</organism>
<proteinExistence type="evidence at transcript level"/>
<protein>
    <recommendedName>
        <fullName>Interleukin-7</fullName>
        <shortName>IL-7</shortName>
    </recommendedName>
</protein>
<feature type="signal peptide" evidence="3">
    <location>
        <begin position="1"/>
        <end position="25"/>
    </location>
</feature>
<feature type="chain" id="PRO_0000015622" description="Interleukin-7">
    <location>
        <begin position="26"/>
        <end position="176"/>
    </location>
</feature>
<feature type="region of interest" description="Disordered" evidence="4">
    <location>
        <begin position="118"/>
        <end position="143"/>
    </location>
</feature>
<feature type="glycosylation site" description="N-linked (GlcNAc...) asparagine" evidence="3">
    <location>
        <position position="94"/>
    </location>
</feature>
<feature type="glycosylation site" description="N-linked (GlcNAc...) asparagine" evidence="3">
    <location>
        <position position="115"/>
    </location>
</feature>
<feature type="glycosylation site" description="N-linked (GlcNAc...) asparagine" evidence="3">
    <location>
        <position position="140"/>
    </location>
</feature>
<feature type="disulfide bond" evidence="1">
    <location>
        <begin position="27"/>
        <end position="165"/>
    </location>
</feature>
<feature type="disulfide bond" evidence="1">
    <location>
        <begin position="58"/>
        <end position="153"/>
    </location>
</feature>
<feature type="disulfide bond" evidence="1">
    <location>
        <begin position="71"/>
        <end position="116"/>
    </location>
</feature>
<sequence>MFHVSFRYIFGIPPLILVLLPVASSDCDISGKDGGAYQNVLMVNIDDLDNMINFDSNCLNNEPNFFKKHSCDDNKEASFLNRASRKLRQFLKMNISDDFKLHLSTVSQGTLTLLNCTSKGKGRKPPSLSEAQPTKNLEENKSSKEQKKQNDLCFLKILLQKIKTCWNKILRGIKEH</sequence>
<comment type="function">
    <text evidence="2">Hematopoietic cytokine that plays an essential role in the development, expansion, and survival of naive and memory T-cells and B-cells thereby regulating the number of mature lymphocytes and maintaining lymphoid homeostasis. Mechanistically, exerts its biological effects through a receptor composed of IL7RA subunit and the cytokine receptor common subunit gamma/CSF2RG. Binding to the receptor leads to activation of various kinases including JAK1 or JAK3 depending on the cell type and subsequently propagation of signals through activation of several downstream signaling pathways including the PI3K/Akt/mTOR or the JAK-STAT5.</text>
</comment>
<comment type="subunit">
    <text evidence="2">Interacts with IL7R and CSF2RG.</text>
</comment>
<comment type="subcellular location">
    <subcellularLocation>
        <location evidence="2">Secreted</location>
    </subcellularLocation>
</comment>
<comment type="similarity">
    <text evidence="5">Belongs to the IL-7/IL-9 family.</text>
</comment>
<dbReference type="EMBL" id="X64540">
    <property type="protein sequence ID" value="CAA45838.1"/>
    <property type="molecule type" value="Genomic_DNA"/>
</dbReference>
<dbReference type="EMBL" id="EU276072">
    <property type="protein sequence ID" value="ABX72070.1"/>
    <property type="molecule type" value="mRNA"/>
</dbReference>
<dbReference type="EMBL" id="BC142466">
    <property type="protein sequence ID" value="AAI42467.1"/>
    <property type="molecule type" value="mRNA"/>
</dbReference>
<dbReference type="PIR" id="A56652">
    <property type="entry name" value="A56652"/>
</dbReference>
<dbReference type="SMR" id="P26895"/>
<dbReference type="FunCoup" id="P26895">
    <property type="interactions" value="51"/>
</dbReference>
<dbReference type="STRING" id="9913.ENSBTAP00000021659"/>
<dbReference type="GlyCosmos" id="P26895">
    <property type="glycosylation" value="3 sites, No reported glycans"/>
</dbReference>
<dbReference type="GlyGen" id="P26895">
    <property type="glycosylation" value="3 sites"/>
</dbReference>
<dbReference type="PaxDb" id="9913-ENSBTAP00000021659"/>
<dbReference type="VEuPathDB" id="HostDB:ENSBTAG00000016284"/>
<dbReference type="eggNOG" id="ENOG502SW6R">
    <property type="taxonomic scope" value="Eukaryota"/>
</dbReference>
<dbReference type="HOGENOM" id="CLU_129929_1_0_1"/>
<dbReference type="InParanoid" id="P26895"/>
<dbReference type="OMA" id="NMSAEYR"/>
<dbReference type="OrthoDB" id="9829887at2759"/>
<dbReference type="TreeFam" id="TF338065"/>
<dbReference type="Reactome" id="R-BTA-1266695">
    <property type="pathway name" value="Interleukin-7 signaling"/>
</dbReference>
<dbReference type="Proteomes" id="UP000009136">
    <property type="component" value="Chromosome 14"/>
</dbReference>
<dbReference type="Bgee" id="ENSBTAG00000016284">
    <property type="expression patterns" value="Expressed in corpus epididymis and 85 other cell types or tissues"/>
</dbReference>
<dbReference type="GO" id="GO:0005615">
    <property type="term" value="C:extracellular space"/>
    <property type="evidence" value="ECO:0000318"/>
    <property type="project" value="GO_Central"/>
</dbReference>
<dbReference type="GO" id="GO:0005125">
    <property type="term" value="F:cytokine activity"/>
    <property type="evidence" value="ECO:0000250"/>
    <property type="project" value="UniProtKB"/>
</dbReference>
<dbReference type="GO" id="GO:0008083">
    <property type="term" value="F:growth factor activity"/>
    <property type="evidence" value="ECO:0000250"/>
    <property type="project" value="UniProtKB"/>
</dbReference>
<dbReference type="GO" id="GO:0005139">
    <property type="term" value="F:interleukin-7 receptor binding"/>
    <property type="evidence" value="ECO:0007669"/>
    <property type="project" value="InterPro"/>
</dbReference>
<dbReference type="GO" id="GO:0045453">
    <property type="term" value="P:bone resorption"/>
    <property type="evidence" value="ECO:0000250"/>
    <property type="project" value="UniProtKB"/>
</dbReference>
<dbReference type="GO" id="GO:0006955">
    <property type="term" value="P:immune response"/>
    <property type="evidence" value="ECO:0007669"/>
    <property type="project" value="InterPro"/>
</dbReference>
<dbReference type="GO" id="GO:0038111">
    <property type="term" value="P:interleukin-7-mediated signaling pathway"/>
    <property type="evidence" value="ECO:0000318"/>
    <property type="project" value="GO_Central"/>
</dbReference>
<dbReference type="GO" id="GO:0043066">
    <property type="term" value="P:negative regulation of apoptotic process"/>
    <property type="evidence" value="ECO:0000250"/>
    <property type="project" value="UniProtKB"/>
</dbReference>
<dbReference type="GO" id="GO:0030890">
    <property type="term" value="P:positive regulation of B cell proliferation"/>
    <property type="evidence" value="ECO:0000250"/>
    <property type="project" value="UniProtKB"/>
</dbReference>
<dbReference type="GO" id="GO:0045582">
    <property type="term" value="P:positive regulation of T cell differentiation"/>
    <property type="evidence" value="ECO:0000250"/>
    <property type="project" value="UniProtKB"/>
</dbReference>
<dbReference type="FunFam" id="1.20.1250.50:FF:000001">
    <property type="entry name" value="Interleukin-7"/>
    <property type="match status" value="1"/>
</dbReference>
<dbReference type="Gene3D" id="1.20.1250.50">
    <property type="match status" value="1"/>
</dbReference>
<dbReference type="InterPro" id="IPR001181">
    <property type="entry name" value="IL-7"/>
</dbReference>
<dbReference type="InterPro" id="IPR018049">
    <property type="entry name" value="IL-7/IL-9_CS"/>
</dbReference>
<dbReference type="InterPro" id="IPR038325">
    <property type="entry name" value="IL7_sf"/>
</dbReference>
<dbReference type="PANTHER" id="PTHR48492">
    <property type="entry name" value="INTERLEUKIN-7"/>
    <property type="match status" value="1"/>
</dbReference>
<dbReference type="PANTHER" id="PTHR48492:SF1">
    <property type="entry name" value="INTERLEUKIN-7"/>
    <property type="match status" value="1"/>
</dbReference>
<dbReference type="Pfam" id="PF01415">
    <property type="entry name" value="IL7"/>
    <property type="match status" value="1"/>
</dbReference>
<dbReference type="PIRSF" id="PIRSF001942">
    <property type="entry name" value="IL-7"/>
    <property type="match status" value="1"/>
</dbReference>
<dbReference type="PRINTS" id="PR00435">
    <property type="entry name" value="INTERLEUKIN7"/>
</dbReference>
<dbReference type="SMART" id="SM00127">
    <property type="entry name" value="IL7"/>
    <property type="match status" value="1"/>
</dbReference>
<dbReference type="PROSITE" id="PS00255">
    <property type="entry name" value="INTERLEUKIN_7_9"/>
    <property type="match status" value="1"/>
</dbReference>